<proteinExistence type="evidence at transcript level"/>
<feature type="chain" id="PRO_0000080390" description="G2/mitotic-specific cyclin-2">
    <location>
        <begin position="1"/>
        <end position="441"/>
    </location>
</feature>
<dbReference type="EMBL" id="X76123">
    <property type="protein sequence ID" value="CAA53729.1"/>
    <property type="molecule type" value="mRNA"/>
</dbReference>
<dbReference type="PIR" id="S41710">
    <property type="entry name" value="S41710"/>
</dbReference>
<dbReference type="SMR" id="P34801"/>
<dbReference type="GO" id="GO:0016538">
    <property type="term" value="F:cyclin-dependent protein serine/threonine kinase regulator activity"/>
    <property type="evidence" value="ECO:0007669"/>
    <property type="project" value="InterPro"/>
</dbReference>
<dbReference type="GO" id="GO:0051301">
    <property type="term" value="P:cell division"/>
    <property type="evidence" value="ECO:0007669"/>
    <property type="project" value="UniProtKB-KW"/>
</dbReference>
<dbReference type="GO" id="GO:0044772">
    <property type="term" value="P:mitotic cell cycle phase transition"/>
    <property type="evidence" value="ECO:0007669"/>
    <property type="project" value="InterPro"/>
</dbReference>
<dbReference type="CDD" id="cd20567">
    <property type="entry name" value="CYCLIN_AtCycB-like_rpt1"/>
    <property type="match status" value="1"/>
</dbReference>
<dbReference type="FunFam" id="1.10.472.10:FF:000032">
    <property type="entry name" value="G2/mitotic-specific cyclin-1"/>
    <property type="match status" value="1"/>
</dbReference>
<dbReference type="Gene3D" id="1.10.472.10">
    <property type="entry name" value="Cyclin-like"/>
    <property type="match status" value="2"/>
</dbReference>
<dbReference type="InterPro" id="IPR039361">
    <property type="entry name" value="Cyclin"/>
</dbReference>
<dbReference type="InterPro" id="IPR013763">
    <property type="entry name" value="Cyclin-like_dom"/>
</dbReference>
<dbReference type="InterPro" id="IPR036915">
    <property type="entry name" value="Cyclin-like_sf"/>
</dbReference>
<dbReference type="InterPro" id="IPR046965">
    <property type="entry name" value="Cyclin_A/B-like"/>
</dbReference>
<dbReference type="InterPro" id="IPR004367">
    <property type="entry name" value="Cyclin_C-dom"/>
</dbReference>
<dbReference type="InterPro" id="IPR006671">
    <property type="entry name" value="Cyclin_N"/>
</dbReference>
<dbReference type="InterPro" id="IPR048258">
    <property type="entry name" value="Cyclins_cyclin-box"/>
</dbReference>
<dbReference type="PANTHER" id="PTHR10177">
    <property type="entry name" value="CYCLINS"/>
    <property type="match status" value="1"/>
</dbReference>
<dbReference type="Pfam" id="PF02984">
    <property type="entry name" value="Cyclin_C"/>
    <property type="match status" value="1"/>
</dbReference>
<dbReference type="Pfam" id="PF00134">
    <property type="entry name" value="Cyclin_N"/>
    <property type="match status" value="1"/>
</dbReference>
<dbReference type="PIRSF" id="PIRSF001771">
    <property type="entry name" value="Cyclin_A_B_D_E"/>
    <property type="match status" value="1"/>
</dbReference>
<dbReference type="SMART" id="SM00385">
    <property type="entry name" value="CYCLIN"/>
    <property type="match status" value="2"/>
</dbReference>
<dbReference type="SMART" id="SM01332">
    <property type="entry name" value="Cyclin_C"/>
    <property type="match status" value="1"/>
</dbReference>
<dbReference type="SUPFAM" id="SSF47954">
    <property type="entry name" value="Cyclin-like"/>
    <property type="match status" value="2"/>
</dbReference>
<dbReference type="PROSITE" id="PS00292">
    <property type="entry name" value="CYCLINS"/>
    <property type="match status" value="1"/>
</dbReference>
<reference key="1">
    <citation type="journal article" date="1994" name="EMBO J.">
        <title>Patterns of cell division revealed by transcriptional regulation of genes during the cell cycle in plants.</title>
        <authorList>
            <person name="Fobert P.R."/>
            <person name="Coen E.S."/>
            <person name="Murphy G.J.P."/>
            <person name="Doonan J.H."/>
        </authorList>
    </citation>
    <scope>NUCLEOTIDE SEQUENCE [MRNA]</scope>
</reference>
<accession>P34801</accession>
<sequence length="441" mass="49205">MGSRHQVVQQQNRGDVVPGAIKQKSMAVEKKNRRALGDIGNVVTVRGVEGKALPQVSRPITRGFCAQLIANAEAAAAENNKNSLAVNAKGADGALPIKRAVARVPVQKKTVKSKPQEIIEISPDTEKKKAPVLEKEITGEKSLKKKAPTLTSTLTARSKAASVVRTKPKEQIVDIDAADVNNDLAVVEYVEDMYKFYKSAENDSRPHDYMDSQPEINEKMRAILIDWLVQVHYKFELSPETLYLTINIVDRYLASKTTSRRELQLLGMSSMLIASKYEEIWAPEVNDLVCISDGSYSNEQVLRMEKKILGALEWYLTVPTPYVFLVRFIKASLPDSDVEKNMVYFLAELGMMNYATIIMYCPSMIAAAAVYAARCTLNKMPIWNETLRMHTGFSEVQLMDCAKLLIDFHGGSTDQKLQGIYRKYSRLEKGAVALLPQPLLA</sequence>
<evidence type="ECO:0000305" key="1"/>
<name>CCN2_ANTMA</name>
<comment type="function">
    <text>Essential for the control of the cell cycle at the G2/M (mitosis) transition. G2/M cyclins accumulate steadily during G2 and are abruptly destroyed at mitosis.</text>
</comment>
<comment type="subunit">
    <text>Interacts with the CDC2 and CDK2 protein kinases to form a serine/threonine kinase holoenzyme complex. The cyclin subunit imparts substrate specificity to the complex.</text>
</comment>
<comment type="developmental stage">
    <text>Accumulates steadily during G2 and is abruptly destroyed at mitosis.</text>
</comment>
<comment type="similarity">
    <text evidence="1">Belongs to the cyclin family. Cyclin AB subfamily.</text>
</comment>
<keyword id="KW-0131">Cell cycle</keyword>
<keyword id="KW-0132">Cell division</keyword>
<keyword id="KW-0195">Cyclin</keyword>
<keyword id="KW-0498">Mitosis</keyword>
<organism>
    <name type="scientific">Antirrhinum majus</name>
    <name type="common">Garden snapdragon</name>
    <dbReference type="NCBI Taxonomy" id="4151"/>
    <lineage>
        <taxon>Eukaryota</taxon>
        <taxon>Viridiplantae</taxon>
        <taxon>Streptophyta</taxon>
        <taxon>Embryophyta</taxon>
        <taxon>Tracheophyta</taxon>
        <taxon>Spermatophyta</taxon>
        <taxon>Magnoliopsida</taxon>
        <taxon>eudicotyledons</taxon>
        <taxon>Gunneridae</taxon>
        <taxon>Pentapetalae</taxon>
        <taxon>asterids</taxon>
        <taxon>lamiids</taxon>
        <taxon>Lamiales</taxon>
        <taxon>Plantaginaceae</taxon>
        <taxon>Antirrhineae</taxon>
        <taxon>Antirrhinum</taxon>
    </lineage>
</organism>
<protein>
    <recommendedName>
        <fullName>G2/mitotic-specific cyclin-2</fullName>
    </recommendedName>
</protein>